<gene>
    <name evidence="1" type="primary">rpsR</name>
    <name type="ordered locus">Rleg2_1053</name>
</gene>
<evidence type="ECO:0000255" key="1">
    <source>
        <dbReference type="HAMAP-Rule" id="MF_00270"/>
    </source>
</evidence>
<evidence type="ECO:0000256" key="2">
    <source>
        <dbReference type="SAM" id="MobiDB-lite"/>
    </source>
</evidence>
<evidence type="ECO:0000305" key="3"/>
<feature type="chain" id="PRO_1000114441" description="Small ribosomal subunit protein bS18">
    <location>
        <begin position="1"/>
        <end position="82"/>
    </location>
</feature>
<feature type="region of interest" description="Disordered" evidence="2">
    <location>
        <begin position="1"/>
        <end position="20"/>
    </location>
</feature>
<sequence length="82" mass="9439">MSETSSAPVRRPFHRRRKTCPFSGANAPRIDYKDVRLLQRYISERGKIVPSRITAVSQKKQRELAQAIKRARFLGLLPYVVA</sequence>
<proteinExistence type="inferred from homology"/>
<comment type="function">
    <text evidence="1">Binds as a heterodimer with protein bS6 to the central domain of the 16S rRNA, where it helps stabilize the platform of the 30S subunit.</text>
</comment>
<comment type="subunit">
    <text evidence="1">Part of the 30S ribosomal subunit. Forms a tight heterodimer with protein bS6.</text>
</comment>
<comment type="similarity">
    <text evidence="1">Belongs to the bacterial ribosomal protein bS18 family.</text>
</comment>
<dbReference type="EMBL" id="CP001191">
    <property type="protein sequence ID" value="ACI54347.1"/>
    <property type="molecule type" value="Genomic_DNA"/>
</dbReference>
<dbReference type="RefSeq" id="WP_003547038.1">
    <property type="nucleotide sequence ID" value="NC_011369.1"/>
</dbReference>
<dbReference type="SMR" id="B5ZWC8"/>
<dbReference type="STRING" id="395492.Rleg2_1053"/>
<dbReference type="GeneID" id="84669244"/>
<dbReference type="KEGG" id="rlt:Rleg2_1053"/>
<dbReference type="eggNOG" id="COG0238">
    <property type="taxonomic scope" value="Bacteria"/>
</dbReference>
<dbReference type="HOGENOM" id="CLU_148710_2_2_5"/>
<dbReference type="Proteomes" id="UP000008330">
    <property type="component" value="Chromosome"/>
</dbReference>
<dbReference type="GO" id="GO:0022627">
    <property type="term" value="C:cytosolic small ribosomal subunit"/>
    <property type="evidence" value="ECO:0007669"/>
    <property type="project" value="TreeGrafter"/>
</dbReference>
<dbReference type="GO" id="GO:0070181">
    <property type="term" value="F:small ribosomal subunit rRNA binding"/>
    <property type="evidence" value="ECO:0007669"/>
    <property type="project" value="TreeGrafter"/>
</dbReference>
<dbReference type="GO" id="GO:0003735">
    <property type="term" value="F:structural constituent of ribosome"/>
    <property type="evidence" value="ECO:0007669"/>
    <property type="project" value="InterPro"/>
</dbReference>
<dbReference type="GO" id="GO:0006412">
    <property type="term" value="P:translation"/>
    <property type="evidence" value="ECO:0007669"/>
    <property type="project" value="UniProtKB-UniRule"/>
</dbReference>
<dbReference type="Gene3D" id="4.10.640.10">
    <property type="entry name" value="Ribosomal protein S18"/>
    <property type="match status" value="1"/>
</dbReference>
<dbReference type="HAMAP" id="MF_00270">
    <property type="entry name" value="Ribosomal_bS18"/>
    <property type="match status" value="1"/>
</dbReference>
<dbReference type="InterPro" id="IPR001648">
    <property type="entry name" value="Ribosomal_bS18"/>
</dbReference>
<dbReference type="InterPro" id="IPR018275">
    <property type="entry name" value="Ribosomal_bS18_CS"/>
</dbReference>
<dbReference type="InterPro" id="IPR036870">
    <property type="entry name" value="Ribosomal_bS18_sf"/>
</dbReference>
<dbReference type="NCBIfam" id="TIGR00165">
    <property type="entry name" value="S18"/>
    <property type="match status" value="1"/>
</dbReference>
<dbReference type="PANTHER" id="PTHR13479">
    <property type="entry name" value="30S RIBOSOMAL PROTEIN S18"/>
    <property type="match status" value="1"/>
</dbReference>
<dbReference type="PANTHER" id="PTHR13479:SF40">
    <property type="entry name" value="SMALL RIBOSOMAL SUBUNIT PROTEIN BS18M"/>
    <property type="match status" value="1"/>
</dbReference>
<dbReference type="Pfam" id="PF01084">
    <property type="entry name" value="Ribosomal_S18"/>
    <property type="match status" value="1"/>
</dbReference>
<dbReference type="PRINTS" id="PR00974">
    <property type="entry name" value="RIBOSOMALS18"/>
</dbReference>
<dbReference type="SUPFAM" id="SSF46911">
    <property type="entry name" value="Ribosomal protein S18"/>
    <property type="match status" value="1"/>
</dbReference>
<dbReference type="PROSITE" id="PS00057">
    <property type="entry name" value="RIBOSOMAL_S18"/>
    <property type="match status" value="1"/>
</dbReference>
<organism>
    <name type="scientific">Rhizobium leguminosarum bv. trifolii (strain WSM2304)</name>
    <dbReference type="NCBI Taxonomy" id="395492"/>
    <lineage>
        <taxon>Bacteria</taxon>
        <taxon>Pseudomonadati</taxon>
        <taxon>Pseudomonadota</taxon>
        <taxon>Alphaproteobacteria</taxon>
        <taxon>Hyphomicrobiales</taxon>
        <taxon>Rhizobiaceae</taxon>
        <taxon>Rhizobium/Agrobacterium group</taxon>
        <taxon>Rhizobium</taxon>
    </lineage>
</organism>
<reference key="1">
    <citation type="journal article" date="2010" name="Stand. Genomic Sci.">
        <title>Complete genome sequence of Rhizobium leguminosarum bv trifolii strain WSM2304, an effective microsymbiont of the South American clover Trifolium polymorphum.</title>
        <authorList>
            <person name="Reeve W."/>
            <person name="O'Hara G."/>
            <person name="Chain P."/>
            <person name="Ardley J."/>
            <person name="Brau L."/>
            <person name="Nandesena K."/>
            <person name="Tiwari R."/>
            <person name="Malfatti S."/>
            <person name="Kiss H."/>
            <person name="Lapidus A."/>
            <person name="Copeland A."/>
            <person name="Nolan M."/>
            <person name="Land M."/>
            <person name="Ivanova N."/>
            <person name="Mavromatis K."/>
            <person name="Markowitz V."/>
            <person name="Kyrpides N."/>
            <person name="Melino V."/>
            <person name="Denton M."/>
            <person name="Yates R."/>
            <person name="Howieson J."/>
        </authorList>
    </citation>
    <scope>NUCLEOTIDE SEQUENCE [LARGE SCALE GENOMIC DNA]</scope>
    <source>
        <strain>WSM2304</strain>
    </source>
</reference>
<protein>
    <recommendedName>
        <fullName evidence="1">Small ribosomal subunit protein bS18</fullName>
    </recommendedName>
    <alternativeName>
        <fullName evidence="3">30S ribosomal protein S18</fullName>
    </alternativeName>
</protein>
<accession>B5ZWC8</accession>
<keyword id="KW-1185">Reference proteome</keyword>
<keyword id="KW-0687">Ribonucleoprotein</keyword>
<keyword id="KW-0689">Ribosomal protein</keyword>
<keyword id="KW-0694">RNA-binding</keyword>
<keyword id="KW-0699">rRNA-binding</keyword>
<name>RS18_RHILW</name>